<name>Y916_TREPA</name>
<sequence length="42" mass="4801">MAPGLWEQEQSLSCGTCTYGRTEVNSRILRKLRVGIGYEREL</sequence>
<protein>
    <recommendedName>
        <fullName>Uncharacterized protein TP_0916</fullName>
    </recommendedName>
</protein>
<dbReference type="EMBL" id="AE000520">
    <property type="protein sequence ID" value="AAC65877.1"/>
    <property type="molecule type" value="Genomic_DNA"/>
</dbReference>
<dbReference type="PIR" id="A71265">
    <property type="entry name" value="A71265"/>
</dbReference>
<dbReference type="SMR" id="O83886"/>
<dbReference type="IntAct" id="O83886">
    <property type="interactions" value="1"/>
</dbReference>
<dbReference type="STRING" id="243276.TP_0916"/>
<dbReference type="EnsemblBacteria" id="AAC65877">
    <property type="protein sequence ID" value="AAC65877"/>
    <property type="gene ID" value="TP_0916"/>
</dbReference>
<dbReference type="KEGG" id="tpa:TP_0916"/>
<dbReference type="HOGENOM" id="CLU_3259314_0_0_12"/>
<dbReference type="Proteomes" id="UP000000811">
    <property type="component" value="Chromosome"/>
</dbReference>
<organism>
    <name type="scientific">Treponema pallidum (strain Nichols)</name>
    <dbReference type="NCBI Taxonomy" id="243276"/>
    <lineage>
        <taxon>Bacteria</taxon>
        <taxon>Pseudomonadati</taxon>
        <taxon>Spirochaetota</taxon>
        <taxon>Spirochaetia</taxon>
        <taxon>Spirochaetales</taxon>
        <taxon>Treponemataceae</taxon>
        <taxon>Treponema</taxon>
    </lineage>
</organism>
<reference key="1">
    <citation type="journal article" date="1998" name="Science">
        <title>Complete genome sequence of Treponema pallidum, the syphilis spirochete.</title>
        <authorList>
            <person name="Fraser C.M."/>
            <person name="Norris S.J."/>
            <person name="Weinstock G.M."/>
            <person name="White O."/>
            <person name="Sutton G.G."/>
            <person name="Dodson R.J."/>
            <person name="Gwinn M.L."/>
            <person name="Hickey E.K."/>
            <person name="Clayton R.A."/>
            <person name="Ketchum K.A."/>
            <person name="Sodergren E."/>
            <person name="Hardham J.M."/>
            <person name="McLeod M.P."/>
            <person name="Salzberg S.L."/>
            <person name="Peterson J.D."/>
            <person name="Khalak H.G."/>
            <person name="Richardson D.L."/>
            <person name="Howell J.K."/>
            <person name="Chidambaram M."/>
            <person name="Utterback T.R."/>
            <person name="McDonald L.A."/>
            <person name="Artiach P."/>
            <person name="Bowman C."/>
            <person name="Cotton M.D."/>
            <person name="Fujii C."/>
            <person name="Garland S.A."/>
            <person name="Hatch B."/>
            <person name="Horst K."/>
            <person name="Roberts K.M."/>
            <person name="Sandusky M."/>
            <person name="Weidman J.F."/>
            <person name="Smith H.O."/>
            <person name="Venter J.C."/>
        </authorList>
    </citation>
    <scope>NUCLEOTIDE SEQUENCE [LARGE SCALE GENOMIC DNA]</scope>
    <source>
        <strain>Nichols</strain>
    </source>
</reference>
<accession>O83886</accession>
<proteinExistence type="predicted"/>
<gene>
    <name type="ordered locus">TP_0916</name>
</gene>
<feature type="chain" id="PRO_0000202350" description="Uncharacterized protein TP_0916">
    <location>
        <begin position="1"/>
        <end position="42"/>
    </location>
</feature>
<keyword id="KW-1185">Reference proteome</keyword>